<gene>
    <name evidence="1" type="primary">lysS</name>
    <name type="ordered locus">AHA_3369</name>
</gene>
<evidence type="ECO:0000255" key="1">
    <source>
        <dbReference type="HAMAP-Rule" id="MF_00252"/>
    </source>
</evidence>
<organism>
    <name type="scientific">Aeromonas hydrophila subsp. hydrophila (strain ATCC 7966 / DSM 30187 / BCRC 13018 / CCUG 14551 / JCM 1027 / KCTC 2358 / NCIMB 9240 / NCTC 8049)</name>
    <dbReference type="NCBI Taxonomy" id="380703"/>
    <lineage>
        <taxon>Bacteria</taxon>
        <taxon>Pseudomonadati</taxon>
        <taxon>Pseudomonadota</taxon>
        <taxon>Gammaproteobacteria</taxon>
        <taxon>Aeromonadales</taxon>
        <taxon>Aeromonadaceae</taxon>
        <taxon>Aeromonas</taxon>
    </lineage>
</organism>
<proteinExistence type="inferred from homology"/>
<name>SYK_AERHH</name>
<sequence length="511" mass="58169">MSEQTTTPEVDQTLDLNNEMQERRSKLAALRAQGNPFPNDFRRDSLSGDLHAEFGDKSADELAALGKRVKIAGRIMTRRIMGKASFATLQDMAGKIQVYVTRDDLPEGFYNEQFKKWDLGDIVGVEGTLFRTNTGELSVHVSDIRLLTKALRPLPEKHKGLTDQEARCRQRYLDLIANEESRKTFVTRTKVVAGIRKFLNDKRFMEVETPMMQVIPGGASARPFITHHNALDIDMYLRIAPELYLKRLVVGGFERVYEINRNFRNEGISVRHNPEFTMLEFYMAYADYIDLMDLTEEMLRTLAQDILGDTKIRYAKEGEEGLTIDFGQPFQRLSMVDSILKYNPDVTRDDLATLEKATAVAKRLHIELMKSWELGHVITAIFEETVEHMLLQPTFITEYPAAVSPLARRNDQNPDVTDRFEFFIGGRELANGFSELNDAEDQAERFQAQVDQKAAGDDEAMFYDADFVTALEHGLPPTAGQGIGIDRLVMLFTNSHTIRDVILFPALRPQK</sequence>
<accession>A0KNK7</accession>
<feature type="chain" id="PRO_1000012836" description="Lysine--tRNA ligase">
    <location>
        <begin position="1"/>
        <end position="511"/>
    </location>
</feature>
<feature type="binding site" evidence="1">
    <location>
        <position position="421"/>
    </location>
    <ligand>
        <name>Mg(2+)</name>
        <dbReference type="ChEBI" id="CHEBI:18420"/>
        <label>1</label>
    </ligand>
</feature>
<feature type="binding site" evidence="1">
    <location>
        <position position="428"/>
    </location>
    <ligand>
        <name>Mg(2+)</name>
        <dbReference type="ChEBI" id="CHEBI:18420"/>
        <label>1</label>
    </ligand>
</feature>
<feature type="binding site" evidence="1">
    <location>
        <position position="428"/>
    </location>
    <ligand>
        <name>Mg(2+)</name>
        <dbReference type="ChEBI" id="CHEBI:18420"/>
        <label>2</label>
    </ligand>
</feature>
<keyword id="KW-0030">Aminoacyl-tRNA synthetase</keyword>
<keyword id="KW-0067">ATP-binding</keyword>
<keyword id="KW-0963">Cytoplasm</keyword>
<keyword id="KW-0436">Ligase</keyword>
<keyword id="KW-0460">Magnesium</keyword>
<keyword id="KW-0479">Metal-binding</keyword>
<keyword id="KW-0547">Nucleotide-binding</keyword>
<keyword id="KW-0648">Protein biosynthesis</keyword>
<keyword id="KW-1185">Reference proteome</keyword>
<dbReference type="EC" id="6.1.1.6" evidence="1"/>
<dbReference type="EMBL" id="CP000462">
    <property type="protein sequence ID" value="ABK36063.1"/>
    <property type="molecule type" value="Genomic_DNA"/>
</dbReference>
<dbReference type="RefSeq" id="WP_011707134.1">
    <property type="nucleotide sequence ID" value="NC_008570.1"/>
</dbReference>
<dbReference type="RefSeq" id="YP_857858.1">
    <property type="nucleotide sequence ID" value="NC_008570.1"/>
</dbReference>
<dbReference type="SMR" id="A0KNK7"/>
<dbReference type="STRING" id="380703.AHA_3369"/>
<dbReference type="EnsemblBacteria" id="ABK36063">
    <property type="protein sequence ID" value="ABK36063"/>
    <property type="gene ID" value="AHA_3369"/>
</dbReference>
<dbReference type="GeneID" id="4489463"/>
<dbReference type="KEGG" id="aha:AHA_3369"/>
<dbReference type="PATRIC" id="fig|380703.7.peg.3368"/>
<dbReference type="eggNOG" id="COG1190">
    <property type="taxonomic scope" value="Bacteria"/>
</dbReference>
<dbReference type="HOGENOM" id="CLU_008255_6_0_6"/>
<dbReference type="OrthoDB" id="9802326at2"/>
<dbReference type="Proteomes" id="UP000000756">
    <property type="component" value="Chromosome"/>
</dbReference>
<dbReference type="GO" id="GO:0005829">
    <property type="term" value="C:cytosol"/>
    <property type="evidence" value="ECO:0007669"/>
    <property type="project" value="TreeGrafter"/>
</dbReference>
<dbReference type="GO" id="GO:0005524">
    <property type="term" value="F:ATP binding"/>
    <property type="evidence" value="ECO:0007669"/>
    <property type="project" value="UniProtKB-UniRule"/>
</dbReference>
<dbReference type="GO" id="GO:0004824">
    <property type="term" value="F:lysine-tRNA ligase activity"/>
    <property type="evidence" value="ECO:0007669"/>
    <property type="project" value="UniProtKB-UniRule"/>
</dbReference>
<dbReference type="GO" id="GO:0000287">
    <property type="term" value="F:magnesium ion binding"/>
    <property type="evidence" value="ECO:0007669"/>
    <property type="project" value="UniProtKB-UniRule"/>
</dbReference>
<dbReference type="GO" id="GO:0000049">
    <property type="term" value="F:tRNA binding"/>
    <property type="evidence" value="ECO:0007669"/>
    <property type="project" value="TreeGrafter"/>
</dbReference>
<dbReference type="GO" id="GO:0006430">
    <property type="term" value="P:lysyl-tRNA aminoacylation"/>
    <property type="evidence" value="ECO:0007669"/>
    <property type="project" value="UniProtKB-UniRule"/>
</dbReference>
<dbReference type="CDD" id="cd00775">
    <property type="entry name" value="LysRS_core"/>
    <property type="match status" value="1"/>
</dbReference>
<dbReference type="CDD" id="cd04322">
    <property type="entry name" value="LysRS_N"/>
    <property type="match status" value="1"/>
</dbReference>
<dbReference type="FunFam" id="2.40.50.140:FF:000024">
    <property type="entry name" value="Lysine--tRNA ligase"/>
    <property type="match status" value="1"/>
</dbReference>
<dbReference type="FunFam" id="3.30.930.10:FF:000001">
    <property type="entry name" value="Lysine--tRNA ligase"/>
    <property type="match status" value="1"/>
</dbReference>
<dbReference type="Gene3D" id="3.30.930.10">
    <property type="entry name" value="Bira Bifunctional Protein, Domain 2"/>
    <property type="match status" value="1"/>
</dbReference>
<dbReference type="Gene3D" id="2.40.50.140">
    <property type="entry name" value="Nucleic acid-binding proteins"/>
    <property type="match status" value="1"/>
</dbReference>
<dbReference type="HAMAP" id="MF_00252">
    <property type="entry name" value="Lys_tRNA_synth_class2"/>
    <property type="match status" value="1"/>
</dbReference>
<dbReference type="InterPro" id="IPR004364">
    <property type="entry name" value="Aa-tRNA-synt_II"/>
</dbReference>
<dbReference type="InterPro" id="IPR006195">
    <property type="entry name" value="aa-tRNA-synth_II"/>
</dbReference>
<dbReference type="InterPro" id="IPR045864">
    <property type="entry name" value="aa-tRNA-synth_II/BPL/LPL"/>
</dbReference>
<dbReference type="InterPro" id="IPR002313">
    <property type="entry name" value="Lys-tRNA-ligase_II"/>
</dbReference>
<dbReference type="InterPro" id="IPR034762">
    <property type="entry name" value="Lys-tRNA-ligase_II_bac/euk"/>
</dbReference>
<dbReference type="InterPro" id="IPR044136">
    <property type="entry name" value="Lys-tRNA-ligase_II_N"/>
</dbReference>
<dbReference type="InterPro" id="IPR018149">
    <property type="entry name" value="Lys-tRNA-synth_II_C"/>
</dbReference>
<dbReference type="InterPro" id="IPR012340">
    <property type="entry name" value="NA-bd_OB-fold"/>
</dbReference>
<dbReference type="InterPro" id="IPR004365">
    <property type="entry name" value="NA-bd_OB_tRNA"/>
</dbReference>
<dbReference type="NCBIfam" id="TIGR00499">
    <property type="entry name" value="lysS_bact"/>
    <property type="match status" value="1"/>
</dbReference>
<dbReference type="NCBIfam" id="NF001756">
    <property type="entry name" value="PRK00484.1"/>
    <property type="match status" value="1"/>
</dbReference>
<dbReference type="PANTHER" id="PTHR42918:SF15">
    <property type="entry name" value="LYSINE--TRNA LIGASE, CHLOROPLASTIC_MITOCHONDRIAL"/>
    <property type="match status" value="1"/>
</dbReference>
<dbReference type="PANTHER" id="PTHR42918">
    <property type="entry name" value="LYSYL-TRNA SYNTHETASE"/>
    <property type="match status" value="1"/>
</dbReference>
<dbReference type="Pfam" id="PF00152">
    <property type="entry name" value="tRNA-synt_2"/>
    <property type="match status" value="1"/>
</dbReference>
<dbReference type="Pfam" id="PF01336">
    <property type="entry name" value="tRNA_anti-codon"/>
    <property type="match status" value="1"/>
</dbReference>
<dbReference type="PIRSF" id="PIRSF039101">
    <property type="entry name" value="LysRS2"/>
    <property type="match status" value="1"/>
</dbReference>
<dbReference type="PRINTS" id="PR00982">
    <property type="entry name" value="TRNASYNTHLYS"/>
</dbReference>
<dbReference type="SUPFAM" id="SSF55681">
    <property type="entry name" value="Class II aaRS and biotin synthetases"/>
    <property type="match status" value="1"/>
</dbReference>
<dbReference type="SUPFAM" id="SSF50249">
    <property type="entry name" value="Nucleic acid-binding proteins"/>
    <property type="match status" value="1"/>
</dbReference>
<dbReference type="PROSITE" id="PS50862">
    <property type="entry name" value="AA_TRNA_LIGASE_II"/>
    <property type="match status" value="1"/>
</dbReference>
<reference key="1">
    <citation type="journal article" date="2006" name="J. Bacteriol.">
        <title>Genome sequence of Aeromonas hydrophila ATCC 7966T: jack of all trades.</title>
        <authorList>
            <person name="Seshadri R."/>
            <person name="Joseph S.W."/>
            <person name="Chopra A.K."/>
            <person name="Sha J."/>
            <person name="Shaw J."/>
            <person name="Graf J."/>
            <person name="Haft D.H."/>
            <person name="Wu M."/>
            <person name="Ren Q."/>
            <person name="Rosovitz M.J."/>
            <person name="Madupu R."/>
            <person name="Tallon L."/>
            <person name="Kim M."/>
            <person name="Jin S."/>
            <person name="Vuong H."/>
            <person name="Stine O.C."/>
            <person name="Ali A."/>
            <person name="Horneman A.J."/>
            <person name="Heidelberg J.F."/>
        </authorList>
    </citation>
    <scope>NUCLEOTIDE SEQUENCE [LARGE SCALE GENOMIC DNA]</scope>
    <source>
        <strain>ATCC 7966 / DSM 30187 / BCRC 13018 / CCUG 14551 / JCM 1027 / KCTC 2358 / NCIMB 9240 / NCTC 8049</strain>
    </source>
</reference>
<protein>
    <recommendedName>
        <fullName evidence="1">Lysine--tRNA ligase</fullName>
        <ecNumber evidence="1">6.1.1.6</ecNumber>
    </recommendedName>
    <alternativeName>
        <fullName evidence="1">Lysyl-tRNA synthetase</fullName>
        <shortName evidence="1">LysRS</shortName>
    </alternativeName>
</protein>
<comment type="catalytic activity">
    <reaction evidence="1">
        <text>tRNA(Lys) + L-lysine + ATP = L-lysyl-tRNA(Lys) + AMP + diphosphate</text>
        <dbReference type="Rhea" id="RHEA:20792"/>
        <dbReference type="Rhea" id="RHEA-COMP:9696"/>
        <dbReference type="Rhea" id="RHEA-COMP:9697"/>
        <dbReference type="ChEBI" id="CHEBI:30616"/>
        <dbReference type="ChEBI" id="CHEBI:32551"/>
        <dbReference type="ChEBI" id="CHEBI:33019"/>
        <dbReference type="ChEBI" id="CHEBI:78442"/>
        <dbReference type="ChEBI" id="CHEBI:78529"/>
        <dbReference type="ChEBI" id="CHEBI:456215"/>
        <dbReference type="EC" id="6.1.1.6"/>
    </reaction>
</comment>
<comment type="cofactor">
    <cofactor evidence="1">
        <name>Mg(2+)</name>
        <dbReference type="ChEBI" id="CHEBI:18420"/>
    </cofactor>
    <text evidence="1">Binds 3 Mg(2+) ions per subunit.</text>
</comment>
<comment type="subunit">
    <text evidence="1">Homodimer.</text>
</comment>
<comment type="subcellular location">
    <subcellularLocation>
        <location evidence="1">Cytoplasm</location>
    </subcellularLocation>
</comment>
<comment type="similarity">
    <text evidence="1">Belongs to the class-II aminoacyl-tRNA synthetase family.</text>
</comment>